<name>PYRC_METST</name>
<sequence length="429" mass="48832">MSNLVLKNCKTIDNKIVNIIIENGIIKDIKKTILPSEKETDTICDIKENIIIPGLIDTHVHLRDPGMTQKETWTTGTQAAAHGGYTTIIDMPNTLPATDTKKAFQEKRNIATKKSYVDFGLHAGVKTRQDVMDIMSEKPASYKIFMDLYTNKQLDEMFNYVSQTNKPLSLHCEDKTLVDYNIKTMKKNPLNKNKTITYSYARSALAELIAVNRAIEFAKKYKLQLHLCHISTRQTLELIHEAKEKLNISIEATPHHIFLDNTTYERYGVKAKTNPPLRDSNYNITIDNLNEFDSIGTDHAPHTIEEKEKDTWKSAAGIPGLETALKLLLTEVNNKRLTLEQLVKLTSTNPANIFNIPNKGKIKKGYDADITVINMKETGKISIENTYTKAKYTPFENRDYVGSNIMTINRGNIISQDNDVYKYDSKYIY</sequence>
<dbReference type="EC" id="3.5.2.3" evidence="1"/>
<dbReference type="EMBL" id="CP000102">
    <property type="protein sequence ID" value="ABC56733.1"/>
    <property type="molecule type" value="Genomic_DNA"/>
</dbReference>
<dbReference type="RefSeq" id="WP_011405933.1">
    <property type="nucleotide sequence ID" value="NC_007681.1"/>
</dbReference>
<dbReference type="SMR" id="Q2NHZ6"/>
<dbReference type="STRING" id="339860.Msp_0323"/>
<dbReference type="KEGG" id="mst:Msp_0323"/>
<dbReference type="eggNOG" id="arCOG00689">
    <property type="taxonomic scope" value="Archaea"/>
</dbReference>
<dbReference type="HOGENOM" id="CLU_015572_1_1_2"/>
<dbReference type="OrthoDB" id="50279at2157"/>
<dbReference type="UniPathway" id="UPA00070">
    <property type="reaction ID" value="UER00117"/>
</dbReference>
<dbReference type="Proteomes" id="UP000001931">
    <property type="component" value="Chromosome"/>
</dbReference>
<dbReference type="GO" id="GO:0005737">
    <property type="term" value="C:cytoplasm"/>
    <property type="evidence" value="ECO:0007669"/>
    <property type="project" value="TreeGrafter"/>
</dbReference>
<dbReference type="GO" id="GO:0004038">
    <property type="term" value="F:allantoinase activity"/>
    <property type="evidence" value="ECO:0007669"/>
    <property type="project" value="TreeGrafter"/>
</dbReference>
<dbReference type="GO" id="GO:0004151">
    <property type="term" value="F:dihydroorotase activity"/>
    <property type="evidence" value="ECO:0007669"/>
    <property type="project" value="UniProtKB-UniRule"/>
</dbReference>
<dbReference type="GO" id="GO:0008270">
    <property type="term" value="F:zinc ion binding"/>
    <property type="evidence" value="ECO:0007669"/>
    <property type="project" value="UniProtKB-UniRule"/>
</dbReference>
<dbReference type="GO" id="GO:0044205">
    <property type="term" value="P:'de novo' UMP biosynthetic process"/>
    <property type="evidence" value="ECO:0007669"/>
    <property type="project" value="UniProtKB-UniRule"/>
</dbReference>
<dbReference type="GO" id="GO:0006145">
    <property type="term" value="P:purine nucleobase catabolic process"/>
    <property type="evidence" value="ECO:0007669"/>
    <property type="project" value="TreeGrafter"/>
</dbReference>
<dbReference type="CDD" id="cd01318">
    <property type="entry name" value="DHOase_IIb"/>
    <property type="match status" value="1"/>
</dbReference>
<dbReference type="FunFam" id="3.20.20.140:FF:000174">
    <property type="entry name" value="Dihydropyrimidinase-related protein 2"/>
    <property type="match status" value="1"/>
</dbReference>
<dbReference type="Gene3D" id="3.20.20.140">
    <property type="entry name" value="Metal-dependent hydrolases"/>
    <property type="match status" value="1"/>
</dbReference>
<dbReference type="Gene3D" id="2.30.40.10">
    <property type="entry name" value="Urease, subunit C, domain 1"/>
    <property type="match status" value="1"/>
</dbReference>
<dbReference type="HAMAP" id="MF_00220_A">
    <property type="entry name" value="PyrC_classI_A"/>
    <property type="match status" value="1"/>
</dbReference>
<dbReference type="InterPro" id="IPR006680">
    <property type="entry name" value="Amidohydro-rel"/>
</dbReference>
<dbReference type="InterPro" id="IPR004722">
    <property type="entry name" value="DHOase"/>
</dbReference>
<dbReference type="InterPro" id="IPR050138">
    <property type="entry name" value="DHOase/Allantoinase_Hydrolase"/>
</dbReference>
<dbReference type="InterPro" id="IPR002195">
    <property type="entry name" value="Dihydroorotase_CS"/>
</dbReference>
<dbReference type="InterPro" id="IPR011059">
    <property type="entry name" value="Metal-dep_hydrolase_composite"/>
</dbReference>
<dbReference type="InterPro" id="IPR032466">
    <property type="entry name" value="Metal_Hydrolase"/>
</dbReference>
<dbReference type="NCBIfam" id="TIGR00857">
    <property type="entry name" value="pyrC_multi"/>
    <property type="match status" value="1"/>
</dbReference>
<dbReference type="PANTHER" id="PTHR43668">
    <property type="entry name" value="ALLANTOINASE"/>
    <property type="match status" value="1"/>
</dbReference>
<dbReference type="PANTHER" id="PTHR43668:SF2">
    <property type="entry name" value="ALLANTOINASE"/>
    <property type="match status" value="1"/>
</dbReference>
<dbReference type="Pfam" id="PF01979">
    <property type="entry name" value="Amidohydro_1"/>
    <property type="match status" value="1"/>
</dbReference>
<dbReference type="SUPFAM" id="SSF51338">
    <property type="entry name" value="Composite domain of metallo-dependent hydrolases"/>
    <property type="match status" value="1"/>
</dbReference>
<dbReference type="SUPFAM" id="SSF51556">
    <property type="entry name" value="Metallo-dependent hydrolases"/>
    <property type="match status" value="1"/>
</dbReference>
<dbReference type="PROSITE" id="PS00483">
    <property type="entry name" value="DIHYDROOROTASE_2"/>
    <property type="match status" value="1"/>
</dbReference>
<comment type="function">
    <text evidence="1">Catalyzes the reversible cyclization of carbamoyl aspartate to dihydroorotate.</text>
</comment>
<comment type="catalytic activity">
    <reaction evidence="1">
        <text>(S)-dihydroorotate + H2O = N-carbamoyl-L-aspartate + H(+)</text>
        <dbReference type="Rhea" id="RHEA:24296"/>
        <dbReference type="ChEBI" id="CHEBI:15377"/>
        <dbReference type="ChEBI" id="CHEBI:15378"/>
        <dbReference type="ChEBI" id="CHEBI:30864"/>
        <dbReference type="ChEBI" id="CHEBI:32814"/>
        <dbReference type="EC" id="3.5.2.3"/>
    </reaction>
</comment>
<comment type="cofactor">
    <cofactor evidence="1">
        <name>Zn(2+)</name>
        <dbReference type="ChEBI" id="CHEBI:29105"/>
    </cofactor>
    <text evidence="1">Binds 2 Zn(2+) ions per subunit.</text>
</comment>
<comment type="pathway">
    <text evidence="1">Pyrimidine metabolism; UMP biosynthesis via de novo pathway; (S)-dihydroorotate from bicarbonate: step 3/3.</text>
</comment>
<comment type="similarity">
    <text evidence="1">Belongs to the metallo-dependent hydrolases superfamily. DHOase family. Class I DHOase subfamily.</text>
</comment>
<protein>
    <recommendedName>
        <fullName evidence="1">Dihydroorotase</fullName>
        <shortName evidence="1">DHOase</shortName>
        <ecNumber evidence="1">3.5.2.3</ecNumber>
    </recommendedName>
</protein>
<reference key="1">
    <citation type="journal article" date="2006" name="J. Bacteriol.">
        <title>The genome sequence of Methanosphaera stadtmanae reveals why this human intestinal archaeon is restricted to methanol and H2 for methane formation and ATP synthesis.</title>
        <authorList>
            <person name="Fricke W.F."/>
            <person name="Seedorf H."/>
            <person name="Henne A."/>
            <person name="Kruer M."/>
            <person name="Liesegang H."/>
            <person name="Hedderich R."/>
            <person name="Gottschalk G."/>
            <person name="Thauer R.K."/>
        </authorList>
    </citation>
    <scope>NUCLEOTIDE SEQUENCE [LARGE SCALE GENOMIC DNA]</scope>
    <source>
        <strain>ATCC 43021 / DSM 3091 / JCM 11832 / MCB-3</strain>
    </source>
</reference>
<feature type="chain" id="PRO_0000325598" description="Dihydroorotase">
    <location>
        <begin position="1"/>
        <end position="429"/>
    </location>
</feature>
<feature type="active site" evidence="1">
    <location>
        <position position="298"/>
    </location>
</feature>
<feature type="binding site" evidence="1">
    <location>
        <position position="59"/>
    </location>
    <ligand>
        <name>Zn(2+)</name>
        <dbReference type="ChEBI" id="CHEBI:29105"/>
        <label>1</label>
    </ligand>
</feature>
<feature type="binding site" evidence="1">
    <location>
        <begin position="61"/>
        <end position="63"/>
    </location>
    <ligand>
        <name>substrate</name>
    </ligand>
</feature>
<feature type="binding site" evidence="1">
    <location>
        <position position="61"/>
    </location>
    <ligand>
        <name>Zn(2+)</name>
        <dbReference type="ChEBI" id="CHEBI:29105"/>
        <label>1</label>
    </ligand>
</feature>
<feature type="binding site" evidence="1">
    <location>
        <position position="93"/>
    </location>
    <ligand>
        <name>substrate</name>
    </ligand>
</feature>
<feature type="binding site" evidence="1">
    <location>
        <position position="143"/>
    </location>
    <ligand>
        <name>Zn(2+)</name>
        <dbReference type="ChEBI" id="CHEBI:29105"/>
        <label>1</label>
    </ligand>
</feature>
<feature type="binding site" evidence="1">
    <location>
        <position position="143"/>
    </location>
    <ligand>
        <name>Zn(2+)</name>
        <dbReference type="ChEBI" id="CHEBI:29105"/>
        <label>2</label>
    </ligand>
</feature>
<feature type="binding site" evidence="1">
    <location>
        <position position="171"/>
    </location>
    <ligand>
        <name>Zn(2+)</name>
        <dbReference type="ChEBI" id="CHEBI:29105"/>
        <label>2</label>
    </ligand>
</feature>
<feature type="binding site" evidence="1">
    <location>
        <position position="229"/>
    </location>
    <ligand>
        <name>Zn(2+)</name>
        <dbReference type="ChEBI" id="CHEBI:29105"/>
        <label>2</label>
    </ligand>
</feature>
<feature type="binding site" evidence="1">
    <location>
        <position position="298"/>
    </location>
    <ligand>
        <name>Zn(2+)</name>
        <dbReference type="ChEBI" id="CHEBI:29105"/>
        <label>1</label>
    </ligand>
</feature>
<feature type="binding site" evidence="1">
    <location>
        <position position="302"/>
    </location>
    <ligand>
        <name>substrate</name>
    </ligand>
</feature>
<feature type="binding site" evidence="1">
    <location>
        <begin position="316"/>
        <end position="317"/>
    </location>
    <ligand>
        <name>substrate</name>
    </ligand>
</feature>
<feature type="modified residue" description="N6-carboxylysine" evidence="1">
    <location>
        <position position="143"/>
    </location>
</feature>
<organism>
    <name type="scientific">Methanosphaera stadtmanae (strain ATCC 43021 / DSM 3091 / JCM 11832 / MCB-3)</name>
    <dbReference type="NCBI Taxonomy" id="339860"/>
    <lineage>
        <taxon>Archaea</taxon>
        <taxon>Methanobacteriati</taxon>
        <taxon>Methanobacteriota</taxon>
        <taxon>Methanomada group</taxon>
        <taxon>Methanobacteria</taxon>
        <taxon>Methanobacteriales</taxon>
        <taxon>Methanobacteriaceae</taxon>
        <taxon>Methanosphaera</taxon>
    </lineage>
</organism>
<evidence type="ECO:0000255" key="1">
    <source>
        <dbReference type="HAMAP-Rule" id="MF_00220"/>
    </source>
</evidence>
<gene>
    <name evidence="1" type="primary">pyrC</name>
    <name type="ordered locus">Msp_0323</name>
</gene>
<accession>Q2NHZ6</accession>
<proteinExistence type="inferred from homology"/>
<keyword id="KW-0378">Hydrolase</keyword>
<keyword id="KW-0479">Metal-binding</keyword>
<keyword id="KW-0665">Pyrimidine biosynthesis</keyword>
<keyword id="KW-1185">Reference proteome</keyword>
<keyword id="KW-0862">Zinc</keyword>